<sequence length="87" mass="9166">MLVLLVAVLVTAVYAFVHAALQRPDAYTAADKLTKPVWLVILGAAVALASILYPVLGVLGMAMSACASGVYLVDVRPKLLEIQGKSR</sequence>
<proteinExistence type="inferred from homology"/>
<accession>P9WKW1</accession>
<accession>L0T3Q2</accession>
<accession>P64695</accession>
<accession>Q11143</accession>
<reference key="1">
    <citation type="journal article" date="1998" name="Nature">
        <title>Deciphering the biology of Mycobacterium tuberculosis from the complete genome sequence.</title>
        <authorList>
            <person name="Cole S.T."/>
            <person name="Brosch R."/>
            <person name="Parkhill J."/>
            <person name="Garnier T."/>
            <person name="Churcher C.M."/>
            <person name="Harris D.E."/>
            <person name="Gordon S.V."/>
            <person name="Eiglmeier K."/>
            <person name="Gas S."/>
            <person name="Barry C.E. III"/>
            <person name="Tekaia F."/>
            <person name="Badcock K."/>
            <person name="Basham D."/>
            <person name="Brown D."/>
            <person name="Chillingworth T."/>
            <person name="Connor R."/>
            <person name="Davies R.M."/>
            <person name="Devlin K."/>
            <person name="Feltwell T."/>
            <person name="Gentles S."/>
            <person name="Hamlin N."/>
            <person name="Holroyd S."/>
            <person name="Hornsby T."/>
            <person name="Jagels K."/>
            <person name="Krogh A."/>
            <person name="McLean J."/>
            <person name="Moule S."/>
            <person name="Murphy L.D."/>
            <person name="Oliver S."/>
            <person name="Osborne J."/>
            <person name="Quail M.A."/>
            <person name="Rajandream M.A."/>
            <person name="Rogers J."/>
            <person name="Rutter S."/>
            <person name="Seeger K."/>
            <person name="Skelton S."/>
            <person name="Squares S."/>
            <person name="Squares R."/>
            <person name="Sulston J.E."/>
            <person name="Taylor K."/>
            <person name="Whitehead S."/>
            <person name="Barrell B.G."/>
        </authorList>
    </citation>
    <scope>NUCLEOTIDE SEQUENCE [LARGE SCALE GENOMIC DNA]</scope>
    <source>
        <strain>ATCC 25618 / H37Rv</strain>
    </source>
</reference>
<evidence type="ECO:0000255" key="1"/>
<evidence type="ECO:0000305" key="2"/>
<gene>
    <name type="ordered locus">Rv0476</name>
    <name type="ORF">MTCY20G9.02</name>
</gene>
<dbReference type="EMBL" id="AL123456">
    <property type="protein sequence ID" value="CCP43210.1"/>
    <property type="molecule type" value="Genomic_DNA"/>
</dbReference>
<dbReference type="PIR" id="G70742">
    <property type="entry name" value="G70742"/>
</dbReference>
<dbReference type="RefSeq" id="NP_214990.1">
    <property type="nucleotide sequence ID" value="NC_000962.3"/>
</dbReference>
<dbReference type="RefSeq" id="WP_003402341.1">
    <property type="nucleotide sequence ID" value="NC_000962.3"/>
</dbReference>
<dbReference type="STRING" id="83332.Rv0476"/>
<dbReference type="PaxDb" id="83332-Rv0476"/>
<dbReference type="DNASU" id="886282"/>
<dbReference type="GeneID" id="886282"/>
<dbReference type="KEGG" id="mtu:Rv0476"/>
<dbReference type="KEGG" id="mtv:RVBD_0476"/>
<dbReference type="PATRIC" id="fig|83332.111.peg.522"/>
<dbReference type="TubercuList" id="Rv0476"/>
<dbReference type="eggNOG" id="ENOG5033BDI">
    <property type="taxonomic scope" value="Bacteria"/>
</dbReference>
<dbReference type="InParanoid" id="P9WKW1"/>
<dbReference type="OrthoDB" id="5191769at2"/>
<dbReference type="Proteomes" id="UP000001584">
    <property type="component" value="Chromosome"/>
</dbReference>
<dbReference type="GO" id="GO:0016020">
    <property type="term" value="C:membrane"/>
    <property type="evidence" value="ECO:0007669"/>
    <property type="project" value="UniProtKB-SubCell"/>
</dbReference>
<dbReference type="InterPro" id="IPR019662">
    <property type="entry name" value="DUF2516"/>
</dbReference>
<dbReference type="Pfam" id="PF10724">
    <property type="entry name" value="DUF2516"/>
    <property type="match status" value="1"/>
</dbReference>
<organism>
    <name type="scientific">Mycobacterium tuberculosis (strain ATCC 25618 / H37Rv)</name>
    <dbReference type="NCBI Taxonomy" id="83332"/>
    <lineage>
        <taxon>Bacteria</taxon>
        <taxon>Bacillati</taxon>
        <taxon>Actinomycetota</taxon>
        <taxon>Actinomycetes</taxon>
        <taxon>Mycobacteriales</taxon>
        <taxon>Mycobacteriaceae</taxon>
        <taxon>Mycobacterium</taxon>
        <taxon>Mycobacterium tuberculosis complex</taxon>
    </lineage>
</organism>
<comment type="subcellular location">
    <subcellularLocation>
        <location evidence="2">Membrane</location>
        <topology evidence="2">Single-pass membrane protein</topology>
    </subcellularLocation>
</comment>
<comment type="similarity">
    <text evidence="2">To M.leprae ML2453.</text>
</comment>
<keyword id="KW-0472">Membrane</keyword>
<keyword id="KW-1185">Reference proteome</keyword>
<keyword id="KW-0732">Signal</keyword>
<keyword id="KW-0812">Transmembrane</keyword>
<keyword id="KW-1133">Transmembrane helix</keyword>
<feature type="signal peptide" evidence="1">
    <location>
        <begin position="1"/>
        <end position="19"/>
    </location>
</feature>
<feature type="chain" id="PRO_0000014071" description="Uncharacterized protein Rv0476">
    <location>
        <begin position="20"/>
        <end position="87"/>
    </location>
</feature>
<feature type="transmembrane region" description="Helical" evidence="1">
    <location>
        <begin position="39"/>
        <end position="59"/>
    </location>
</feature>
<name>Y476_MYCTU</name>
<protein>
    <recommendedName>
        <fullName>Uncharacterized protein Rv0476</fullName>
    </recommendedName>
</protein>